<dbReference type="EC" id="4.1.1.20" evidence="2"/>
<dbReference type="EMBL" id="M23174">
    <property type="status" value="NOT_ANNOTATED_CDS"/>
    <property type="molecule type" value="Unassigned_DNA"/>
</dbReference>
<dbReference type="EMBL" id="AE004091">
    <property type="protein sequence ID" value="AAG08662.1"/>
    <property type="molecule type" value="Genomic_DNA"/>
</dbReference>
<dbReference type="PIR" id="A31133">
    <property type="entry name" value="A31133"/>
</dbReference>
<dbReference type="PIR" id="F82986">
    <property type="entry name" value="F82986"/>
</dbReference>
<dbReference type="RefSeq" id="NP_253964.1">
    <property type="nucleotide sequence ID" value="NC_002516.2"/>
</dbReference>
<dbReference type="RefSeq" id="WP_003114343.1">
    <property type="nucleotide sequence ID" value="NZ_QZGE01000020.1"/>
</dbReference>
<dbReference type="SMR" id="P19572"/>
<dbReference type="FunCoup" id="P19572">
    <property type="interactions" value="544"/>
</dbReference>
<dbReference type="STRING" id="208964.PA5277"/>
<dbReference type="PaxDb" id="208964-PA5277"/>
<dbReference type="DNASU" id="877749"/>
<dbReference type="GeneID" id="877749"/>
<dbReference type="KEGG" id="pae:PA5277"/>
<dbReference type="PATRIC" id="fig|208964.12.peg.5531"/>
<dbReference type="PseudoCAP" id="PA5277"/>
<dbReference type="HOGENOM" id="CLU_026444_0_0_6"/>
<dbReference type="InParanoid" id="P19572"/>
<dbReference type="OrthoDB" id="9802241at2"/>
<dbReference type="PhylomeDB" id="P19572"/>
<dbReference type="BioCyc" id="PAER208964:G1FZ6-5398-MONOMER"/>
<dbReference type="UniPathway" id="UPA00034">
    <property type="reaction ID" value="UER00027"/>
</dbReference>
<dbReference type="Proteomes" id="UP000002438">
    <property type="component" value="Chromosome"/>
</dbReference>
<dbReference type="GO" id="GO:0008836">
    <property type="term" value="F:diaminopimelate decarboxylase activity"/>
    <property type="evidence" value="ECO:0000315"/>
    <property type="project" value="PseudoCAP"/>
</dbReference>
<dbReference type="GO" id="GO:0030170">
    <property type="term" value="F:pyridoxal phosphate binding"/>
    <property type="evidence" value="ECO:0007669"/>
    <property type="project" value="UniProtKB-UniRule"/>
</dbReference>
<dbReference type="GO" id="GO:0009089">
    <property type="term" value="P:lysine biosynthetic process via diaminopimelate"/>
    <property type="evidence" value="ECO:0000318"/>
    <property type="project" value="GO_Central"/>
</dbReference>
<dbReference type="CDD" id="cd06828">
    <property type="entry name" value="PLPDE_III_DapDC"/>
    <property type="match status" value="1"/>
</dbReference>
<dbReference type="FunFam" id="2.40.37.10:FF:000003">
    <property type="entry name" value="Diaminopimelate decarboxylase"/>
    <property type="match status" value="1"/>
</dbReference>
<dbReference type="FunFam" id="3.20.20.10:FF:000003">
    <property type="entry name" value="Diaminopimelate decarboxylase"/>
    <property type="match status" value="1"/>
</dbReference>
<dbReference type="Gene3D" id="3.20.20.10">
    <property type="entry name" value="Alanine racemase"/>
    <property type="match status" value="1"/>
</dbReference>
<dbReference type="Gene3D" id="2.40.37.10">
    <property type="entry name" value="Lyase, Ornithine Decarboxylase, Chain A, domain 1"/>
    <property type="match status" value="1"/>
</dbReference>
<dbReference type="HAMAP" id="MF_02120">
    <property type="entry name" value="LysA"/>
    <property type="match status" value="1"/>
</dbReference>
<dbReference type="InterPro" id="IPR009006">
    <property type="entry name" value="Ala_racemase/Decarboxylase_C"/>
</dbReference>
<dbReference type="InterPro" id="IPR002986">
    <property type="entry name" value="DAP_deCOOHase_LysA"/>
</dbReference>
<dbReference type="InterPro" id="IPR022643">
    <property type="entry name" value="De-COase2_C"/>
</dbReference>
<dbReference type="InterPro" id="IPR022644">
    <property type="entry name" value="De-COase2_N"/>
</dbReference>
<dbReference type="InterPro" id="IPR022653">
    <property type="entry name" value="De-COase2_pyr-phos_BS"/>
</dbReference>
<dbReference type="InterPro" id="IPR000183">
    <property type="entry name" value="Orn/DAP/Arg_de-COase"/>
</dbReference>
<dbReference type="InterPro" id="IPR029066">
    <property type="entry name" value="PLP-binding_barrel"/>
</dbReference>
<dbReference type="NCBIfam" id="TIGR01048">
    <property type="entry name" value="lysA"/>
    <property type="match status" value="1"/>
</dbReference>
<dbReference type="PANTHER" id="PTHR43727">
    <property type="entry name" value="DIAMINOPIMELATE DECARBOXYLASE"/>
    <property type="match status" value="1"/>
</dbReference>
<dbReference type="PANTHER" id="PTHR43727:SF2">
    <property type="entry name" value="GROUP IV DECARBOXYLASE"/>
    <property type="match status" value="1"/>
</dbReference>
<dbReference type="Pfam" id="PF02784">
    <property type="entry name" value="Orn_Arg_deC_N"/>
    <property type="match status" value="1"/>
</dbReference>
<dbReference type="Pfam" id="PF00278">
    <property type="entry name" value="Orn_DAP_Arg_deC"/>
    <property type="match status" value="1"/>
</dbReference>
<dbReference type="PRINTS" id="PR01181">
    <property type="entry name" value="DAPDCRBXLASE"/>
</dbReference>
<dbReference type="PRINTS" id="PR01179">
    <property type="entry name" value="ODADCRBXLASE"/>
</dbReference>
<dbReference type="SUPFAM" id="SSF50621">
    <property type="entry name" value="Alanine racemase C-terminal domain-like"/>
    <property type="match status" value="1"/>
</dbReference>
<dbReference type="SUPFAM" id="SSF51419">
    <property type="entry name" value="PLP-binding barrel"/>
    <property type="match status" value="1"/>
</dbReference>
<dbReference type="PROSITE" id="PS00878">
    <property type="entry name" value="ODR_DC_2_1"/>
    <property type="match status" value="1"/>
</dbReference>
<dbReference type="PROSITE" id="PS00879">
    <property type="entry name" value="ODR_DC_2_2"/>
    <property type="match status" value="1"/>
</dbReference>
<evidence type="ECO:0000255" key="1"/>
<evidence type="ECO:0000255" key="2">
    <source>
        <dbReference type="HAMAP-Rule" id="MF_02120"/>
    </source>
</evidence>
<evidence type="ECO:0000305" key="3"/>
<organism>
    <name type="scientific">Pseudomonas aeruginosa (strain ATCC 15692 / DSM 22644 / CIP 104116 / JCM 14847 / LMG 12228 / 1C / PRS 101 / PAO1)</name>
    <dbReference type="NCBI Taxonomy" id="208964"/>
    <lineage>
        <taxon>Bacteria</taxon>
        <taxon>Pseudomonadati</taxon>
        <taxon>Pseudomonadota</taxon>
        <taxon>Gammaproteobacteria</taxon>
        <taxon>Pseudomonadales</taxon>
        <taxon>Pseudomonadaceae</taxon>
        <taxon>Pseudomonas</taxon>
    </lineage>
</organism>
<proteinExistence type="inferred from homology"/>
<gene>
    <name evidence="2" type="primary">lysA</name>
    <name type="ordered locus">PA5277</name>
</gene>
<sequence>MDTFSYRDAELFAEGVALSRIAERFGTPTYVYSRAHIEAQYRAYADALAGMPHLVCFAVKANSNLGVLNVLARLGAGFDIVSRGELERVLAAGGDPAKVVFSGVGKTRDDMRRALEVGVHCFNVESGEELERLQRVAAELGVKAPVSLRVNPDVDAQTHPYISTGLKENKFGIAIDEAEAVYARAAELDHLEVIGVDCHIGSQLTQLEPFLDALERLLGLVDRLAGKGIGIRHLDLGGGLGVRYRDEQPPLAGDYIRAIRERLHGRDLTLVFEPGRSIVANAGVLLTRVEYLKHTEHKDFAIVDAAMNDLIRPALYQAWMDVQAVRPRDAAPRRYDLVGPICETGDFLAKDRDLALAEGDLLAVRSAGAYGFVMSSNYNTRGRAAEVLVDGEQTHEVRRRETVQELYAGESLLPQ</sequence>
<protein>
    <recommendedName>
        <fullName evidence="2">Diaminopimelate decarboxylase</fullName>
        <shortName evidence="2">DAP decarboxylase</shortName>
        <shortName evidence="2">DAPDC</shortName>
        <ecNumber evidence="2">4.1.1.20</ecNumber>
    </recommendedName>
</protein>
<name>DCDA_PSEAE</name>
<reference key="1">
    <citation type="journal article" date="1988" name="Mol. Biol. Evol.">
        <title>Pseudomonas aeruginosa diaminopimelate decarboxylase: evolutionary relationship with other amino acid decarboxylases.</title>
        <authorList>
            <person name="Martin C."/>
            <person name="Cami B."/>
            <person name="Yeh P."/>
            <person name="Stragier P."/>
            <person name="Parsot C."/>
            <person name="Patte J.-C."/>
        </authorList>
    </citation>
    <scope>NUCLEOTIDE SEQUENCE [GENOMIC DNA]</scope>
</reference>
<reference key="2">
    <citation type="journal article" date="2000" name="Nature">
        <title>Complete genome sequence of Pseudomonas aeruginosa PAO1, an opportunistic pathogen.</title>
        <authorList>
            <person name="Stover C.K."/>
            <person name="Pham X.-Q.T."/>
            <person name="Erwin A.L."/>
            <person name="Mizoguchi S.D."/>
            <person name="Warrener P."/>
            <person name="Hickey M.J."/>
            <person name="Brinkman F.S.L."/>
            <person name="Hufnagle W.O."/>
            <person name="Kowalik D.J."/>
            <person name="Lagrou M."/>
            <person name="Garber R.L."/>
            <person name="Goltry L."/>
            <person name="Tolentino E."/>
            <person name="Westbrock-Wadman S."/>
            <person name="Yuan Y."/>
            <person name="Brody L.L."/>
            <person name="Coulter S.N."/>
            <person name="Folger K.R."/>
            <person name="Kas A."/>
            <person name="Larbig K."/>
            <person name="Lim R.M."/>
            <person name="Smith K.A."/>
            <person name="Spencer D.H."/>
            <person name="Wong G.K.-S."/>
            <person name="Wu Z."/>
            <person name="Paulsen I.T."/>
            <person name="Reizer J."/>
            <person name="Saier M.H. Jr."/>
            <person name="Hancock R.E.W."/>
            <person name="Lory S."/>
            <person name="Olson M.V."/>
        </authorList>
    </citation>
    <scope>NUCLEOTIDE SEQUENCE [LARGE SCALE GENOMIC DNA]</scope>
    <source>
        <strain>ATCC 15692 / DSM 22644 / CIP 104116 / JCM 14847 / LMG 12228 / 1C / PRS 101 / PAO1</strain>
    </source>
</reference>
<comment type="function">
    <text evidence="2">Specifically catalyzes the decarboxylation of meso-diaminopimelate (meso-DAP) to L-lysine.</text>
</comment>
<comment type="catalytic activity">
    <reaction evidence="2">
        <text>meso-2,6-diaminopimelate + H(+) = L-lysine + CO2</text>
        <dbReference type="Rhea" id="RHEA:15101"/>
        <dbReference type="ChEBI" id="CHEBI:15378"/>
        <dbReference type="ChEBI" id="CHEBI:16526"/>
        <dbReference type="ChEBI" id="CHEBI:32551"/>
        <dbReference type="ChEBI" id="CHEBI:57791"/>
        <dbReference type="EC" id="4.1.1.20"/>
    </reaction>
</comment>
<comment type="cofactor">
    <cofactor evidence="2">
        <name>pyridoxal 5'-phosphate</name>
        <dbReference type="ChEBI" id="CHEBI:597326"/>
    </cofactor>
</comment>
<comment type="pathway">
    <text evidence="2">Amino-acid biosynthesis; L-lysine biosynthesis via DAP pathway; L-lysine from DL-2,6-diaminopimelate: step 1/1.</text>
</comment>
<comment type="subunit">
    <text evidence="2">Homodimer.</text>
</comment>
<comment type="similarity">
    <text evidence="2">Belongs to the Orn/Lys/Arg decarboxylase class-II family. LysA subfamily.</text>
</comment>
<feature type="chain" id="PRO_0000149933" description="Diaminopimelate decarboxylase">
    <location>
        <begin position="1"/>
        <end position="415"/>
    </location>
</feature>
<feature type="active site" description="Proton donor" evidence="1">
    <location>
        <position position="342"/>
    </location>
</feature>
<feature type="binding site" evidence="2">
    <location>
        <position position="239"/>
    </location>
    <ligand>
        <name>pyridoxal 5'-phosphate</name>
        <dbReference type="ChEBI" id="CHEBI:597326"/>
    </ligand>
</feature>
<feature type="binding site" evidence="2">
    <location>
        <begin position="273"/>
        <end position="276"/>
    </location>
    <ligand>
        <name>pyridoxal 5'-phosphate</name>
        <dbReference type="ChEBI" id="CHEBI:597326"/>
    </ligand>
</feature>
<feature type="binding site" evidence="2">
    <location>
        <position position="276"/>
    </location>
    <ligand>
        <name>substrate</name>
    </ligand>
</feature>
<feature type="binding site" evidence="2">
    <location>
        <position position="312"/>
    </location>
    <ligand>
        <name>substrate</name>
    </ligand>
</feature>
<feature type="binding site" evidence="2">
    <location>
        <position position="316"/>
    </location>
    <ligand>
        <name>substrate</name>
    </ligand>
</feature>
<feature type="binding site" evidence="2">
    <location>
        <position position="343"/>
    </location>
    <ligand>
        <name>substrate</name>
    </ligand>
</feature>
<feature type="binding site" evidence="2">
    <location>
        <position position="370"/>
    </location>
    <ligand>
        <name>pyridoxal 5'-phosphate</name>
        <dbReference type="ChEBI" id="CHEBI:597326"/>
    </ligand>
</feature>
<feature type="binding site" evidence="2">
    <location>
        <position position="370"/>
    </location>
    <ligand>
        <name>substrate</name>
    </ligand>
</feature>
<feature type="modified residue" description="N6-(pyridoxal phosphate)lysine" evidence="2">
    <location>
        <position position="60"/>
    </location>
</feature>
<feature type="sequence conflict" description="In Ref. 1." evidence="3" ref="1">
    <original>E</original>
    <variation>Q</variation>
    <location>
        <position position="392"/>
    </location>
</feature>
<feature type="sequence conflict" description="In Ref. 1." evidence="3" ref="1">
    <original>Q</original>
    <variation>E</variation>
    <location>
        <position position="404"/>
    </location>
</feature>
<accession>P19572</accession>
<keyword id="KW-0028">Amino-acid biosynthesis</keyword>
<keyword id="KW-0210">Decarboxylase</keyword>
<keyword id="KW-0456">Lyase</keyword>
<keyword id="KW-0457">Lysine biosynthesis</keyword>
<keyword id="KW-0663">Pyridoxal phosphate</keyword>
<keyword id="KW-1185">Reference proteome</keyword>